<protein>
    <recommendedName>
        <fullName evidence="1">Light-independent protochlorophyllide reductase subunit N</fullName>
        <shortName evidence="1">DPOR subunit N</shortName>
        <shortName evidence="1">LI-POR subunit N</shortName>
        <ecNumber evidence="1">1.3.7.7</ecNumber>
    </recommendedName>
</protein>
<accession>Q1ACE1</accession>
<gene>
    <name evidence="1" type="primary">chlN</name>
</gene>
<reference key="1">
    <citation type="journal article" date="2006" name="Mol. Biol. Evol.">
        <title>The chloroplast genome sequence of Chara vulgaris sheds new light into the closest green algal relatives of land plants.</title>
        <authorList>
            <person name="Turmel M."/>
            <person name="Otis C."/>
            <person name="Lemieux C."/>
        </authorList>
    </citation>
    <scope>NUCLEOTIDE SEQUENCE [LARGE SCALE GENOMIC DNA]</scope>
</reference>
<geneLocation type="chloroplast"/>
<organism>
    <name type="scientific">Chara vulgaris</name>
    <name type="common">Common stonewort</name>
    <dbReference type="NCBI Taxonomy" id="55564"/>
    <lineage>
        <taxon>Eukaryota</taxon>
        <taxon>Viridiplantae</taxon>
        <taxon>Streptophyta</taxon>
        <taxon>Charophyceae</taxon>
        <taxon>Charales</taxon>
        <taxon>Characeae</taxon>
        <taxon>Chara</taxon>
    </lineage>
</organism>
<feature type="chain" id="PRO_0000275271" description="Light-independent protochlorophyllide reductase subunit N">
    <location>
        <begin position="1"/>
        <end position="467"/>
    </location>
</feature>
<feature type="binding site" evidence="1">
    <location>
        <position position="22"/>
    </location>
    <ligand>
        <name>[4Fe-4S] cluster</name>
        <dbReference type="ChEBI" id="CHEBI:49883"/>
        <note>ligand shared with heterodimeric partner</note>
    </ligand>
</feature>
<feature type="binding site" evidence="1">
    <location>
        <position position="47"/>
    </location>
    <ligand>
        <name>[4Fe-4S] cluster</name>
        <dbReference type="ChEBI" id="CHEBI:49883"/>
        <note>ligand shared with heterodimeric partner</note>
    </ligand>
</feature>
<feature type="binding site" evidence="1">
    <location>
        <position position="107"/>
    </location>
    <ligand>
        <name>[4Fe-4S] cluster</name>
        <dbReference type="ChEBI" id="CHEBI:49883"/>
        <note>ligand shared with heterodimeric partner</note>
    </ligand>
</feature>
<evidence type="ECO:0000255" key="1">
    <source>
        <dbReference type="HAMAP-Rule" id="MF_00352"/>
    </source>
</evidence>
<dbReference type="EC" id="1.3.7.7" evidence="1"/>
<dbReference type="EMBL" id="DQ229107">
    <property type="protein sequence ID" value="ABA61904.1"/>
    <property type="molecule type" value="Genomic_DNA"/>
</dbReference>
<dbReference type="RefSeq" id="YP_635806.1">
    <property type="nucleotide sequence ID" value="NC_008097.1"/>
</dbReference>
<dbReference type="SMR" id="Q1ACE1"/>
<dbReference type="GeneID" id="4100274"/>
<dbReference type="UniPathway" id="UPA00670"/>
<dbReference type="GO" id="GO:0009507">
    <property type="term" value="C:chloroplast"/>
    <property type="evidence" value="ECO:0007669"/>
    <property type="project" value="UniProtKB-SubCell"/>
</dbReference>
<dbReference type="GO" id="GO:0051539">
    <property type="term" value="F:4 iron, 4 sulfur cluster binding"/>
    <property type="evidence" value="ECO:0007669"/>
    <property type="project" value="UniProtKB-UniRule"/>
</dbReference>
<dbReference type="GO" id="GO:0005524">
    <property type="term" value="F:ATP binding"/>
    <property type="evidence" value="ECO:0007669"/>
    <property type="project" value="UniProtKB-UniRule"/>
</dbReference>
<dbReference type="GO" id="GO:0046872">
    <property type="term" value="F:metal ion binding"/>
    <property type="evidence" value="ECO:0007669"/>
    <property type="project" value="UniProtKB-KW"/>
</dbReference>
<dbReference type="GO" id="GO:0016730">
    <property type="term" value="F:oxidoreductase activity, acting on iron-sulfur proteins as donors"/>
    <property type="evidence" value="ECO:0007669"/>
    <property type="project" value="InterPro"/>
</dbReference>
<dbReference type="GO" id="GO:0016636">
    <property type="term" value="F:oxidoreductase activity, acting on the CH-CH group of donors, iron-sulfur protein as acceptor"/>
    <property type="evidence" value="ECO:0007669"/>
    <property type="project" value="UniProtKB-UniRule"/>
</dbReference>
<dbReference type="GO" id="GO:0036068">
    <property type="term" value="P:light-independent chlorophyll biosynthetic process"/>
    <property type="evidence" value="ECO:0007669"/>
    <property type="project" value="UniProtKB-UniRule"/>
</dbReference>
<dbReference type="GO" id="GO:0019685">
    <property type="term" value="P:photosynthesis, dark reaction"/>
    <property type="evidence" value="ECO:0007669"/>
    <property type="project" value="InterPro"/>
</dbReference>
<dbReference type="CDD" id="cd01979">
    <property type="entry name" value="Pchlide_reductase_N"/>
    <property type="match status" value="1"/>
</dbReference>
<dbReference type="Gene3D" id="3.40.50.1980">
    <property type="entry name" value="Nitrogenase molybdenum iron protein domain"/>
    <property type="match status" value="3"/>
</dbReference>
<dbReference type="HAMAP" id="MF_00352">
    <property type="entry name" value="ChlN_BchN"/>
    <property type="match status" value="1"/>
</dbReference>
<dbReference type="InterPro" id="IPR050293">
    <property type="entry name" value="LIPOR_BchN/ChlN"/>
</dbReference>
<dbReference type="InterPro" id="IPR000510">
    <property type="entry name" value="Nase/OxRdtase_comp1"/>
</dbReference>
<dbReference type="InterPro" id="IPR005970">
    <property type="entry name" value="Protochl_reductN"/>
</dbReference>
<dbReference type="NCBIfam" id="TIGR01279">
    <property type="entry name" value="DPOR_bchN"/>
    <property type="match status" value="1"/>
</dbReference>
<dbReference type="NCBIfam" id="NF002768">
    <property type="entry name" value="PRK02842.1"/>
    <property type="match status" value="1"/>
</dbReference>
<dbReference type="PANTHER" id="PTHR39429">
    <property type="entry name" value="LIGHT-INDEPENDENT PROTOCHLOROPHYLLIDE REDUCTASE SUBUNIT N"/>
    <property type="match status" value="1"/>
</dbReference>
<dbReference type="PANTHER" id="PTHR39429:SF3">
    <property type="entry name" value="LIGHT-INDEPENDENT PROTOCHLOROPHYLLIDE REDUCTASE SUBUNIT N"/>
    <property type="match status" value="1"/>
</dbReference>
<dbReference type="Pfam" id="PF00148">
    <property type="entry name" value="Oxidored_nitro"/>
    <property type="match status" value="1"/>
</dbReference>
<dbReference type="PIRSF" id="PIRSF000162">
    <property type="entry name" value="P_chlorophyll_rd"/>
    <property type="match status" value="1"/>
</dbReference>
<dbReference type="SUPFAM" id="SSF53807">
    <property type="entry name" value="Helical backbone' metal receptor"/>
    <property type="match status" value="1"/>
</dbReference>
<proteinExistence type="inferred from homology"/>
<comment type="function">
    <text evidence="1">Component of the dark-operative protochlorophyllide reductase (DPOR) that uses Mg-ATP and reduced ferredoxin to reduce ring D of protochlorophyllide (Pchlide) to form chlorophyllide a (Chlide). This reaction is light-independent. The NB-protein (ChlN-ChlB) is the catalytic component of the complex.</text>
</comment>
<comment type="catalytic activity">
    <reaction evidence="1">
        <text>chlorophyllide a + oxidized 2[4Fe-4S]-[ferredoxin] + 2 ADP + 2 phosphate = protochlorophyllide a + reduced 2[4Fe-4S]-[ferredoxin] + 2 ATP + 2 H2O</text>
        <dbReference type="Rhea" id="RHEA:28202"/>
        <dbReference type="Rhea" id="RHEA-COMP:10002"/>
        <dbReference type="Rhea" id="RHEA-COMP:10004"/>
        <dbReference type="ChEBI" id="CHEBI:15377"/>
        <dbReference type="ChEBI" id="CHEBI:30616"/>
        <dbReference type="ChEBI" id="CHEBI:33722"/>
        <dbReference type="ChEBI" id="CHEBI:33723"/>
        <dbReference type="ChEBI" id="CHEBI:43474"/>
        <dbReference type="ChEBI" id="CHEBI:83348"/>
        <dbReference type="ChEBI" id="CHEBI:83350"/>
        <dbReference type="ChEBI" id="CHEBI:456216"/>
        <dbReference type="EC" id="1.3.7.7"/>
    </reaction>
</comment>
<comment type="cofactor">
    <cofactor evidence="1">
        <name>[4Fe-4S] cluster</name>
        <dbReference type="ChEBI" id="CHEBI:49883"/>
    </cofactor>
    <text evidence="1">Binds 1 [4Fe-4S] cluster per heterodimer. The cluster is bound at the heterodimer interface by residues from both subunits.</text>
</comment>
<comment type="pathway">
    <text evidence="1">Porphyrin-containing compound metabolism; chlorophyll biosynthesis (light-independent).</text>
</comment>
<comment type="subunit">
    <text evidence="1">Protochlorophyllide reductase is composed of three subunits; ChlL, ChlN and ChlB. Forms a heterotetramer of two ChlB and two ChlN subunits.</text>
</comment>
<comment type="subcellular location">
    <subcellularLocation>
        <location>Plastid</location>
        <location>Chloroplast</location>
    </subcellularLocation>
</comment>
<comment type="similarity">
    <text evidence="1">Belongs to the BchN/ChlN family.</text>
</comment>
<name>CHLN_CHAVU</name>
<keyword id="KW-0004">4Fe-4S</keyword>
<keyword id="KW-0067">ATP-binding</keyword>
<keyword id="KW-0149">Chlorophyll biosynthesis</keyword>
<keyword id="KW-0150">Chloroplast</keyword>
<keyword id="KW-0408">Iron</keyword>
<keyword id="KW-0411">Iron-sulfur</keyword>
<keyword id="KW-0479">Metal-binding</keyword>
<keyword id="KW-0547">Nucleotide-binding</keyword>
<keyword id="KW-0560">Oxidoreductase</keyword>
<keyword id="KW-0602">Photosynthesis</keyword>
<keyword id="KW-0934">Plastid</keyword>
<sequence length="467" mass="53077">MLEKISDTLTFECETGNYHTFCPISCVAWLYQKIEDSFFLVVGTKTCGYFLQNALGVMIFAEPRYAMAELEEGDISAQLNDYEELKRLCIQIKKDRNPSVIVWIGTCTTEIIKMDLEGMAPKLEAEIGIPIVVARANGLDYAFTQGEDTVLAAIVHRCPDYKLQNKTDLTDNDIQEDATRFSFLKLRKNNIRSISATNSHPPLVLFGSLPTTVSSQLNLELKRNQIEVSGWLPTQRYTDLPSLGEGVYVCGVNPFLSRTATTLMRRKKCKLISAPFPIGPDGTRAWIEKICNVFNIQPTGLEERENKIWDGLEDYLDLVRGKSVFFMGDNLLEISLARFLIRCGMIVYEIGIPYMDKRYQAAELMLLQKTCEMMNVPLPRIVEKPDNYNQIQRIRELKPDLAITGMAHANPLEARGISTKWSVEFTFAQIHGFTNARDILELVTRPLRRNQSLHELGWNNLVKVNSQ</sequence>